<gene>
    <name evidence="1" type="primary">rplA</name>
    <name evidence="1" type="synonym">rpl1</name>
    <name type="ordered locus">P9301_02231</name>
</gene>
<reference key="1">
    <citation type="journal article" date="2007" name="PLoS Genet.">
        <title>Patterns and implications of gene gain and loss in the evolution of Prochlorococcus.</title>
        <authorList>
            <person name="Kettler G.C."/>
            <person name="Martiny A.C."/>
            <person name="Huang K."/>
            <person name="Zucker J."/>
            <person name="Coleman M.L."/>
            <person name="Rodrigue S."/>
            <person name="Chen F."/>
            <person name="Lapidus A."/>
            <person name="Ferriera S."/>
            <person name="Johnson J."/>
            <person name="Steglich C."/>
            <person name="Church G.M."/>
            <person name="Richardson P."/>
            <person name="Chisholm S.W."/>
        </authorList>
    </citation>
    <scope>NUCLEOTIDE SEQUENCE [LARGE SCALE GENOMIC DNA]</scope>
    <source>
        <strain>MIT 9301</strain>
    </source>
</reference>
<accession>A3PAS1</accession>
<keyword id="KW-1185">Reference proteome</keyword>
<keyword id="KW-0678">Repressor</keyword>
<keyword id="KW-0687">Ribonucleoprotein</keyword>
<keyword id="KW-0689">Ribosomal protein</keyword>
<keyword id="KW-0694">RNA-binding</keyword>
<keyword id="KW-0699">rRNA-binding</keyword>
<keyword id="KW-0810">Translation regulation</keyword>
<keyword id="KW-0820">tRNA-binding</keyword>
<dbReference type="EMBL" id="CP000576">
    <property type="protein sequence ID" value="ABO16846.1"/>
    <property type="molecule type" value="Genomic_DNA"/>
</dbReference>
<dbReference type="RefSeq" id="WP_011862247.1">
    <property type="nucleotide sequence ID" value="NC_009091.1"/>
</dbReference>
<dbReference type="SMR" id="A3PAS1"/>
<dbReference type="STRING" id="167546.P9301_02231"/>
<dbReference type="KEGG" id="pmg:P9301_02231"/>
<dbReference type="eggNOG" id="COG0081">
    <property type="taxonomic scope" value="Bacteria"/>
</dbReference>
<dbReference type="HOGENOM" id="CLU_062853_0_0_3"/>
<dbReference type="OrthoDB" id="9803740at2"/>
<dbReference type="Proteomes" id="UP000001430">
    <property type="component" value="Chromosome"/>
</dbReference>
<dbReference type="GO" id="GO:0015934">
    <property type="term" value="C:large ribosomal subunit"/>
    <property type="evidence" value="ECO:0007669"/>
    <property type="project" value="InterPro"/>
</dbReference>
<dbReference type="GO" id="GO:0019843">
    <property type="term" value="F:rRNA binding"/>
    <property type="evidence" value="ECO:0007669"/>
    <property type="project" value="UniProtKB-UniRule"/>
</dbReference>
<dbReference type="GO" id="GO:0003735">
    <property type="term" value="F:structural constituent of ribosome"/>
    <property type="evidence" value="ECO:0007669"/>
    <property type="project" value="InterPro"/>
</dbReference>
<dbReference type="GO" id="GO:0000049">
    <property type="term" value="F:tRNA binding"/>
    <property type="evidence" value="ECO:0007669"/>
    <property type="project" value="UniProtKB-KW"/>
</dbReference>
<dbReference type="GO" id="GO:0006417">
    <property type="term" value="P:regulation of translation"/>
    <property type="evidence" value="ECO:0007669"/>
    <property type="project" value="UniProtKB-KW"/>
</dbReference>
<dbReference type="GO" id="GO:0006412">
    <property type="term" value="P:translation"/>
    <property type="evidence" value="ECO:0007669"/>
    <property type="project" value="UniProtKB-UniRule"/>
</dbReference>
<dbReference type="CDD" id="cd00403">
    <property type="entry name" value="Ribosomal_L1"/>
    <property type="match status" value="1"/>
</dbReference>
<dbReference type="FunFam" id="3.40.50.790:FF:000001">
    <property type="entry name" value="50S ribosomal protein L1"/>
    <property type="match status" value="1"/>
</dbReference>
<dbReference type="Gene3D" id="3.30.190.20">
    <property type="match status" value="1"/>
</dbReference>
<dbReference type="Gene3D" id="3.40.50.790">
    <property type="match status" value="1"/>
</dbReference>
<dbReference type="HAMAP" id="MF_01318_B">
    <property type="entry name" value="Ribosomal_uL1_B"/>
    <property type="match status" value="1"/>
</dbReference>
<dbReference type="InterPro" id="IPR005878">
    <property type="entry name" value="Ribosom_uL1_bac-type"/>
</dbReference>
<dbReference type="InterPro" id="IPR002143">
    <property type="entry name" value="Ribosomal_uL1"/>
</dbReference>
<dbReference type="InterPro" id="IPR023674">
    <property type="entry name" value="Ribosomal_uL1-like"/>
</dbReference>
<dbReference type="InterPro" id="IPR028364">
    <property type="entry name" value="Ribosomal_uL1/biogenesis"/>
</dbReference>
<dbReference type="InterPro" id="IPR016095">
    <property type="entry name" value="Ribosomal_uL1_3-a/b-sand"/>
</dbReference>
<dbReference type="InterPro" id="IPR023673">
    <property type="entry name" value="Ribosomal_uL1_CS"/>
</dbReference>
<dbReference type="NCBIfam" id="TIGR01169">
    <property type="entry name" value="rplA_bact"/>
    <property type="match status" value="1"/>
</dbReference>
<dbReference type="PANTHER" id="PTHR36427">
    <property type="entry name" value="54S RIBOSOMAL PROTEIN L1, MITOCHONDRIAL"/>
    <property type="match status" value="1"/>
</dbReference>
<dbReference type="PANTHER" id="PTHR36427:SF3">
    <property type="entry name" value="LARGE RIBOSOMAL SUBUNIT PROTEIN UL1M"/>
    <property type="match status" value="1"/>
</dbReference>
<dbReference type="Pfam" id="PF00687">
    <property type="entry name" value="Ribosomal_L1"/>
    <property type="match status" value="1"/>
</dbReference>
<dbReference type="PIRSF" id="PIRSF002155">
    <property type="entry name" value="Ribosomal_L1"/>
    <property type="match status" value="1"/>
</dbReference>
<dbReference type="SUPFAM" id="SSF56808">
    <property type="entry name" value="Ribosomal protein L1"/>
    <property type="match status" value="1"/>
</dbReference>
<dbReference type="PROSITE" id="PS01199">
    <property type="entry name" value="RIBOSOMAL_L1"/>
    <property type="match status" value="1"/>
</dbReference>
<name>RL1_PROM0</name>
<organism>
    <name type="scientific">Prochlorococcus marinus (strain MIT 9301)</name>
    <dbReference type="NCBI Taxonomy" id="167546"/>
    <lineage>
        <taxon>Bacteria</taxon>
        <taxon>Bacillati</taxon>
        <taxon>Cyanobacteriota</taxon>
        <taxon>Cyanophyceae</taxon>
        <taxon>Synechococcales</taxon>
        <taxon>Prochlorococcaceae</taxon>
        <taxon>Prochlorococcus</taxon>
    </lineage>
</organism>
<proteinExistence type="inferred from homology"/>
<comment type="function">
    <text evidence="1">Binds directly to 23S rRNA. The L1 stalk is quite mobile in the ribosome, and is involved in E site tRNA release.</text>
</comment>
<comment type="function">
    <text evidence="1">Protein L1 is also a translational repressor protein, it controls the translation of the L11 operon by binding to its mRNA.</text>
</comment>
<comment type="subunit">
    <text evidence="1">Part of the 50S ribosomal subunit.</text>
</comment>
<comment type="similarity">
    <text evidence="1">Belongs to the universal ribosomal protein uL1 family.</text>
</comment>
<sequence>MKKLSKRMAALSTKIEDRIYAPLEALSIIKENANAKFDETIEAHIRLGIDPKYTDQQLRTTVALPHGTGQSIKIAVITSGENVSKAKAAGADLFGEEDLVESINKGNMEFDLLIATPDMMPKVAKLGRVLGPRGLMPNPKAGTVTNDIANAIKEFKAGKLEFRADKAGIVHVRFGKASFTKEALFDNLKTLQESIDKNKPSGAKGKYWKTFYVTSTMGPSVQVDINAVQDYQPEG</sequence>
<protein>
    <recommendedName>
        <fullName evidence="1">Large ribosomal subunit protein uL1</fullName>
    </recommendedName>
    <alternativeName>
        <fullName evidence="2">50S ribosomal protein L1</fullName>
    </alternativeName>
</protein>
<feature type="chain" id="PRO_0000308072" description="Large ribosomal subunit protein uL1">
    <location>
        <begin position="1"/>
        <end position="235"/>
    </location>
</feature>
<evidence type="ECO:0000255" key="1">
    <source>
        <dbReference type="HAMAP-Rule" id="MF_01318"/>
    </source>
</evidence>
<evidence type="ECO:0000305" key="2"/>